<evidence type="ECO:0000255" key="1">
    <source>
        <dbReference type="HAMAP-Rule" id="MF_01553"/>
    </source>
</evidence>
<gene>
    <name evidence="1" type="primary">rpoY</name>
    <name type="ordered locus">Aflv_1898</name>
</gene>
<protein>
    <recommendedName>
        <fullName evidence="1">DNA-directed RNA polymerase subunit epsilon</fullName>
        <shortName evidence="1">RNAP epsilon subunit</shortName>
        <ecNumber evidence="1">2.7.7.6</ecNumber>
    </recommendedName>
    <alternativeName>
        <fullName evidence="1">RNA polymerase epsilon subunit</fullName>
    </alternativeName>
    <alternativeName>
        <fullName evidence="1">Transcriptase subunit epsilon</fullName>
    </alternativeName>
</protein>
<feature type="chain" id="PRO_1000199612" description="DNA-directed RNA polymerase subunit epsilon">
    <location>
        <begin position="1"/>
        <end position="71"/>
    </location>
</feature>
<accession>B7GIB5</accession>
<reference key="1">
    <citation type="journal article" date="2008" name="Genome Biol.">
        <title>Encapsulated in silica: genome, proteome and physiology of the thermophilic bacterium Anoxybacillus flavithermus WK1.</title>
        <authorList>
            <person name="Saw J.H."/>
            <person name="Mountain B.W."/>
            <person name="Feng L."/>
            <person name="Omelchenko M.V."/>
            <person name="Hou S."/>
            <person name="Saito J.A."/>
            <person name="Stott M.B."/>
            <person name="Li D."/>
            <person name="Zhao G."/>
            <person name="Wu J."/>
            <person name="Galperin M.Y."/>
            <person name="Koonin E.V."/>
            <person name="Makarova K.S."/>
            <person name="Wolf Y.I."/>
            <person name="Rigden D.J."/>
            <person name="Dunfield P.F."/>
            <person name="Wang L."/>
            <person name="Alam M."/>
        </authorList>
    </citation>
    <scope>NUCLEOTIDE SEQUENCE [LARGE SCALE GENOMIC DNA]</scope>
    <source>
        <strain>DSM 21510 / WK1</strain>
    </source>
</reference>
<dbReference type="EC" id="2.7.7.6" evidence="1"/>
<dbReference type="EMBL" id="CP000922">
    <property type="protein sequence ID" value="ACJ34259.1"/>
    <property type="molecule type" value="Genomic_DNA"/>
</dbReference>
<dbReference type="RefSeq" id="WP_006321313.1">
    <property type="nucleotide sequence ID" value="NC_011567.1"/>
</dbReference>
<dbReference type="SMR" id="B7GIB5"/>
<dbReference type="STRING" id="491915.Aflv_1898"/>
<dbReference type="GeneID" id="7038151"/>
<dbReference type="KEGG" id="afl:Aflv_1898"/>
<dbReference type="eggNOG" id="COG5503">
    <property type="taxonomic scope" value="Bacteria"/>
</dbReference>
<dbReference type="HOGENOM" id="CLU_187518_1_0_9"/>
<dbReference type="Proteomes" id="UP000000742">
    <property type="component" value="Chromosome"/>
</dbReference>
<dbReference type="GO" id="GO:0000428">
    <property type="term" value="C:DNA-directed RNA polymerase complex"/>
    <property type="evidence" value="ECO:0007669"/>
    <property type="project" value="UniProtKB-KW"/>
</dbReference>
<dbReference type="GO" id="GO:0003677">
    <property type="term" value="F:DNA binding"/>
    <property type="evidence" value="ECO:0007669"/>
    <property type="project" value="UniProtKB-UniRule"/>
</dbReference>
<dbReference type="GO" id="GO:0003899">
    <property type="term" value="F:DNA-directed RNA polymerase activity"/>
    <property type="evidence" value="ECO:0007669"/>
    <property type="project" value="UniProtKB-UniRule"/>
</dbReference>
<dbReference type="GO" id="GO:0006351">
    <property type="term" value="P:DNA-templated transcription"/>
    <property type="evidence" value="ECO:0007669"/>
    <property type="project" value="UniProtKB-UniRule"/>
</dbReference>
<dbReference type="Gene3D" id="3.10.20.730">
    <property type="entry name" value="RNAP, epsilon subunit-like"/>
    <property type="match status" value="1"/>
</dbReference>
<dbReference type="HAMAP" id="MF_01553">
    <property type="entry name" value="RNApol_bact_RpoY"/>
    <property type="match status" value="1"/>
</dbReference>
<dbReference type="InterPro" id="IPR009907">
    <property type="entry name" value="RpoY"/>
</dbReference>
<dbReference type="NCBIfam" id="NF010188">
    <property type="entry name" value="PRK13667.1"/>
    <property type="match status" value="1"/>
</dbReference>
<dbReference type="Pfam" id="PF07288">
    <property type="entry name" value="RpoY"/>
    <property type="match status" value="1"/>
</dbReference>
<organism>
    <name type="scientific">Anoxybacillus flavithermus (strain DSM 21510 / WK1)</name>
    <dbReference type="NCBI Taxonomy" id="491915"/>
    <lineage>
        <taxon>Bacteria</taxon>
        <taxon>Bacillati</taxon>
        <taxon>Bacillota</taxon>
        <taxon>Bacilli</taxon>
        <taxon>Bacillales</taxon>
        <taxon>Anoxybacillaceae</taxon>
        <taxon>Anoxybacillus</taxon>
    </lineage>
</organism>
<comment type="function">
    <text evidence="1">A non-essential component of RNA polymerase (RNAP).</text>
</comment>
<comment type="catalytic activity">
    <reaction evidence="1">
        <text>RNA(n) + a ribonucleoside 5'-triphosphate = RNA(n+1) + diphosphate</text>
        <dbReference type="Rhea" id="RHEA:21248"/>
        <dbReference type="Rhea" id="RHEA-COMP:14527"/>
        <dbReference type="Rhea" id="RHEA-COMP:17342"/>
        <dbReference type="ChEBI" id="CHEBI:33019"/>
        <dbReference type="ChEBI" id="CHEBI:61557"/>
        <dbReference type="ChEBI" id="CHEBI:140395"/>
        <dbReference type="EC" id="2.7.7.6"/>
    </reaction>
</comment>
<comment type="subunit">
    <text evidence="1">RNAP is composed of a core of 2 alpha, a beta and a beta' subunit. The core is associated with a delta subunit, and at least one of epsilon or omega. When a sigma factor is associated with the core the holoenzyme is formed, which can initiate transcription.</text>
</comment>
<comment type="similarity">
    <text evidence="1">Belongs to the RNA polymerase subunit epsilon family.</text>
</comment>
<keyword id="KW-0240">DNA-directed RNA polymerase</keyword>
<keyword id="KW-0548">Nucleotidyltransferase</keyword>
<keyword id="KW-0804">Transcription</keyword>
<keyword id="KW-0808">Transferase</keyword>
<name>RPOY_ANOFW</name>
<proteinExistence type="inferred from homology"/>
<sequence length="71" mass="8632">MIFKVFYQETIDEVPVREKTKTLYIEAESERDVRRKLQDRHINIEYIQPLEGAHLAYEQQNPDFHVLEIEQ</sequence>